<protein>
    <recommendedName>
        <fullName evidence="1">N-(5'-phosphoribosyl)anthranilate isomerase</fullName>
        <shortName evidence="1">PRAI</shortName>
        <ecNumber evidence="1">5.3.1.24</ecNumber>
    </recommendedName>
</protein>
<reference key="1">
    <citation type="journal article" date="2008" name="BMC Genomics">
        <title>Acidithiobacillus ferrooxidans metabolism: from genome sequence to industrial applications.</title>
        <authorList>
            <person name="Valdes J."/>
            <person name="Pedroso I."/>
            <person name="Quatrini R."/>
            <person name="Dodson R.J."/>
            <person name="Tettelin H."/>
            <person name="Blake R. II"/>
            <person name="Eisen J.A."/>
            <person name="Holmes D.S."/>
        </authorList>
    </citation>
    <scope>NUCLEOTIDE SEQUENCE [LARGE SCALE GENOMIC DNA]</scope>
    <source>
        <strain>ATCC 23270 / DSM 14882 / CIP 104768 / NCIMB 8455</strain>
    </source>
</reference>
<feature type="chain" id="PRO_1000197070" description="N-(5'-phosphoribosyl)anthranilate isomerase">
    <location>
        <begin position="1"/>
        <end position="205"/>
    </location>
</feature>
<keyword id="KW-0028">Amino-acid biosynthesis</keyword>
<keyword id="KW-0057">Aromatic amino acid biosynthesis</keyword>
<keyword id="KW-0413">Isomerase</keyword>
<keyword id="KW-1185">Reference proteome</keyword>
<keyword id="KW-0822">Tryptophan biosynthesis</keyword>
<accession>B7J4T0</accession>
<dbReference type="EC" id="5.3.1.24" evidence="1"/>
<dbReference type="EMBL" id="CP001219">
    <property type="protein sequence ID" value="ACK78247.1"/>
    <property type="molecule type" value="Genomic_DNA"/>
</dbReference>
<dbReference type="SMR" id="B7J4T0"/>
<dbReference type="STRING" id="243159.AFE_2070"/>
<dbReference type="PaxDb" id="243159-AFE_2070"/>
<dbReference type="KEGG" id="afr:AFE_2070"/>
<dbReference type="eggNOG" id="COG0135">
    <property type="taxonomic scope" value="Bacteria"/>
</dbReference>
<dbReference type="HOGENOM" id="CLU_076364_2_0_6"/>
<dbReference type="UniPathway" id="UPA00035">
    <property type="reaction ID" value="UER00042"/>
</dbReference>
<dbReference type="Proteomes" id="UP000001362">
    <property type="component" value="Chromosome"/>
</dbReference>
<dbReference type="GO" id="GO:0004640">
    <property type="term" value="F:phosphoribosylanthranilate isomerase activity"/>
    <property type="evidence" value="ECO:0007669"/>
    <property type="project" value="UniProtKB-UniRule"/>
</dbReference>
<dbReference type="GO" id="GO:0000162">
    <property type="term" value="P:L-tryptophan biosynthetic process"/>
    <property type="evidence" value="ECO:0007669"/>
    <property type="project" value="UniProtKB-UniRule"/>
</dbReference>
<dbReference type="CDD" id="cd00405">
    <property type="entry name" value="PRAI"/>
    <property type="match status" value="1"/>
</dbReference>
<dbReference type="FunFam" id="3.20.20.70:FF:000075">
    <property type="entry name" value="Tryptophan biosynthesis protein TRP1"/>
    <property type="match status" value="1"/>
</dbReference>
<dbReference type="Gene3D" id="3.20.20.70">
    <property type="entry name" value="Aldolase class I"/>
    <property type="match status" value="1"/>
</dbReference>
<dbReference type="HAMAP" id="MF_00135">
    <property type="entry name" value="PRAI"/>
    <property type="match status" value="1"/>
</dbReference>
<dbReference type="InterPro" id="IPR013785">
    <property type="entry name" value="Aldolase_TIM"/>
</dbReference>
<dbReference type="InterPro" id="IPR001240">
    <property type="entry name" value="PRAI_dom"/>
</dbReference>
<dbReference type="InterPro" id="IPR011060">
    <property type="entry name" value="RibuloseP-bd_barrel"/>
</dbReference>
<dbReference type="InterPro" id="IPR044643">
    <property type="entry name" value="TrpF_fam"/>
</dbReference>
<dbReference type="NCBIfam" id="NF002298">
    <property type="entry name" value="PRK01222.1-4"/>
    <property type="match status" value="1"/>
</dbReference>
<dbReference type="PANTHER" id="PTHR42894">
    <property type="entry name" value="N-(5'-PHOSPHORIBOSYL)ANTHRANILATE ISOMERASE"/>
    <property type="match status" value="1"/>
</dbReference>
<dbReference type="PANTHER" id="PTHR42894:SF1">
    <property type="entry name" value="N-(5'-PHOSPHORIBOSYL)ANTHRANILATE ISOMERASE"/>
    <property type="match status" value="1"/>
</dbReference>
<dbReference type="Pfam" id="PF00697">
    <property type="entry name" value="PRAI"/>
    <property type="match status" value="1"/>
</dbReference>
<dbReference type="SUPFAM" id="SSF51366">
    <property type="entry name" value="Ribulose-phoshate binding barrel"/>
    <property type="match status" value="1"/>
</dbReference>
<organism>
    <name type="scientific">Acidithiobacillus ferrooxidans (strain ATCC 23270 / DSM 14882 / CIP 104768 / NCIMB 8455)</name>
    <name type="common">Ferrobacillus ferrooxidans (strain ATCC 23270)</name>
    <dbReference type="NCBI Taxonomy" id="243159"/>
    <lineage>
        <taxon>Bacteria</taxon>
        <taxon>Pseudomonadati</taxon>
        <taxon>Pseudomonadota</taxon>
        <taxon>Acidithiobacillia</taxon>
        <taxon>Acidithiobacillales</taxon>
        <taxon>Acidithiobacillaceae</taxon>
        <taxon>Acidithiobacillus</taxon>
    </lineage>
</organism>
<gene>
    <name evidence="1" type="primary">trpF</name>
    <name type="ordered locus">AFE_2070</name>
</gene>
<sequence>MPMVRIKICGITNTEDARAAAAAGADAVGLVFYRSSPRALDAVRARKILAALPPFVTRVGLFVNAEAADVAATLQQCPLDVLQFHGDESPSLCRGFGRPYIKVLRVTAAQDLRPAVDAYHDAQGLLLDCAAPGVWGGSGRSFDWWRLPDLGKPLILAGGLHAENVAEAIAIARPYAVDVSSGVELSPGRKDHDKMARFVARVRGT</sequence>
<comment type="catalytic activity">
    <reaction evidence="1">
        <text>N-(5-phospho-beta-D-ribosyl)anthranilate = 1-(2-carboxyphenylamino)-1-deoxy-D-ribulose 5-phosphate</text>
        <dbReference type="Rhea" id="RHEA:21540"/>
        <dbReference type="ChEBI" id="CHEBI:18277"/>
        <dbReference type="ChEBI" id="CHEBI:58613"/>
        <dbReference type="EC" id="5.3.1.24"/>
    </reaction>
</comment>
<comment type="pathway">
    <text evidence="1">Amino-acid biosynthesis; L-tryptophan biosynthesis; L-tryptophan from chorismate: step 3/5.</text>
</comment>
<comment type="similarity">
    <text evidence="1">Belongs to the TrpF family.</text>
</comment>
<evidence type="ECO:0000255" key="1">
    <source>
        <dbReference type="HAMAP-Rule" id="MF_00135"/>
    </source>
</evidence>
<proteinExistence type="inferred from homology"/>
<name>TRPF_ACIF2</name>